<dbReference type="EC" id="2.3.1.117" evidence="1"/>
<dbReference type="EMBL" id="BA000036">
    <property type="protein sequence ID" value="BAB98499.1"/>
    <property type="molecule type" value="Genomic_DNA"/>
</dbReference>
<dbReference type="EMBL" id="BX927151">
    <property type="protein sequence ID" value="CAF19812.1"/>
    <property type="molecule type" value="Genomic_DNA"/>
</dbReference>
<dbReference type="RefSeq" id="NP_600334.1">
    <property type="nucleotide sequence ID" value="NC_003450.3"/>
</dbReference>
<dbReference type="RefSeq" id="WP_003863790.1">
    <property type="nucleotide sequence ID" value="NC_006958.1"/>
</dbReference>
<dbReference type="PDB" id="5E3P">
    <property type="method" value="X-ray"/>
    <property type="resolution" value="2.01 A"/>
    <property type="chains" value="A=2-297"/>
</dbReference>
<dbReference type="PDB" id="5E3Q">
    <property type="method" value="X-ray"/>
    <property type="resolution" value="1.80 A"/>
    <property type="chains" value="A=2-297"/>
</dbReference>
<dbReference type="PDB" id="5E3R">
    <property type="method" value="X-ray"/>
    <property type="resolution" value="1.85 A"/>
    <property type="chains" value="A=2-297"/>
</dbReference>
<dbReference type="PDBsum" id="5E3P"/>
<dbReference type="PDBsum" id="5E3Q"/>
<dbReference type="PDBsum" id="5E3R"/>
<dbReference type="SMR" id="Q8NRE3"/>
<dbReference type="STRING" id="196627.cg1256"/>
<dbReference type="GeneID" id="1019091"/>
<dbReference type="KEGG" id="cgb:cg1256"/>
<dbReference type="KEGG" id="cgl:Cgl1106"/>
<dbReference type="PATRIC" id="fig|196627.13.peg.1085"/>
<dbReference type="eggNOG" id="COG2171">
    <property type="taxonomic scope" value="Bacteria"/>
</dbReference>
<dbReference type="HOGENOM" id="CLU_057490_1_0_11"/>
<dbReference type="OrthoDB" id="9782799at2"/>
<dbReference type="BioCyc" id="CORYNE:G18NG-10678-MONOMER"/>
<dbReference type="BRENDA" id="2.3.1.117">
    <property type="organism ID" value="960"/>
</dbReference>
<dbReference type="UniPathway" id="UPA00034">
    <property type="reaction ID" value="UER00019"/>
</dbReference>
<dbReference type="EvolutionaryTrace" id="Q8NRE3"/>
<dbReference type="Proteomes" id="UP000000582">
    <property type="component" value="Chromosome"/>
</dbReference>
<dbReference type="Proteomes" id="UP000001009">
    <property type="component" value="Chromosome"/>
</dbReference>
<dbReference type="GO" id="GO:0005737">
    <property type="term" value="C:cytoplasm"/>
    <property type="evidence" value="ECO:0007669"/>
    <property type="project" value="UniProtKB-SubCell"/>
</dbReference>
<dbReference type="GO" id="GO:0008666">
    <property type="term" value="F:2,3,4,5-tetrahydropyridine-2,6-dicarboxylate N-succinyltransferase activity"/>
    <property type="evidence" value="ECO:0007669"/>
    <property type="project" value="UniProtKB-UniRule"/>
</dbReference>
<dbReference type="GO" id="GO:0000287">
    <property type="term" value="F:magnesium ion binding"/>
    <property type="evidence" value="ECO:0007669"/>
    <property type="project" value="UniProtKB-UniRule"/>
</dbReference>
<dbReference type="GO" id="GO:0019877">
    <property type="term" value="P:diaminopimelate biosynthetic process"/>
    <property type="evidence" value="ECO:0007669"/>
    <property type="project" value="UniProtKB-UniRule"/>
</dbReference>
<dbReference type="GO" id="GO:0009089">
    <property type="term" value="P:lysine biosynthetic process via diaminopimelate"/>
    <property type="evidence" value="ECO:0007669"/>
    <property type="project" value="UniProtKB-UniRule"/>
</dbReference>
<dbReference type="CDD" id="cd04649">
    <property type="entry name" value="LbH_THP_succinylT_putative"/>
    <property type="match status" value="1"/>
</dbReference>
<dbReference type="Gene3D" id="3.30.70.2010">
    <property type="match status" value="1"/>
</dbReference>
<dbReference type="Gene3D" id="2.160.10.10">
    <property type="entry name" value="Hexapeptide repeat proteins"/>
    <property type="match status" value="1"/>
</dbReference>
<dbReference type="Gene3D" id="3.30.60.70">
    <property type="entry name" value="Trimeric LpxA-like enzymes"/>
    <property type="match status" value="1"/>
</dbReference>
<dbReference type="HAMAP" id="MF_02122">
    <property type="entry name" value="DapD_type2"/>
    <property type="match status" value="1"/>
</dbReference>
<dbReference type="InterPro" id="IPR019875">
    <property type="entry name" value="DapD_actinobacteria"/>
</dbReference>
<dbReference type="InterPro" id="IPR001451">
    <property type="entry name" value="Hexapep"/>
</dbReference>
<dbReference type="InterPro" id="IPR032784">
    <property type="entry name" value="THDPS_M"/>
</dbReference>
<dbReference type="InterPro" id="IPR038361">
    <property type="entry name" value="THDPS_M_sf"/>
</dbReference>
<dbReference type="InterPro" id="IPR011004">
    <property type="entry name" value="Trimer_LpxA-like_sf"/>
</dbReference>
<dbReference type="InterPro" id="IPR026586">
    <property type="entry name" value="Type2_DapD"/>
</dbReference>
<dbReference type="NCBIfam" id="TIGR03535">
    <property type="entry name" value="DapD_actino"/>
    <property type="match status" value="1"/>
</dbReference>
<dbReference type="Pfam" id="PF14602">
    <property type="entry name" value="Hexapep_2"/>
    <property type="match status" value="1"/>
</dbReference>
<dbReference type="Pfam" id="PF14789">
    <property type="entry name" value="THDPS_M"/>
    <property type="match status" value="1"/>
</dbReference>
<dbReference type="SUPFAM" id="SSF51161">
    <property type="entry name" value="Trimeric LpxA-like enzymes"/>
    <property type="match status" value="1"/>
</dbReference>
<gene>
    <name evidence="1" type="primary">dapD</name>
    <name type="ordered locus">Cgl1106</name>
    <name type="ordered locus">cg1256</name>
</gene>
<sequence>MTTASATGIATLTSTGDVLDVWYPEIGSTDQSALTPLEGVDEDRNVTRKIVTTTIDTDAAPTDTYDAWLRLHLLSHRVFRPHTINLDGIFGLLNNVVWTNFGPCAVDGFALTRARLSRRGQVTVYSVDKFPRMVDYVVPSGVRIGDADRVRLGAYLADGTTVMHEGFVNFNAGTLGASMVEGRISAGVTVDDGTDVGGGASIMGTLSGGGQHVISLGKRCLLGANSGCGIPLGDDCIIEAGLYITAGTKVLFDGSLHKASTLAGSNGLIFRRDSVSGQVVAVPNTKVVELNTALHSN</sequence>
<protein>
    <recommendedName>
        <fullName evidence="1">2,3,4,5-tetrahydropyridine-2,6-dicarboxylate N-succinyltransferase</fullName>
        <ecNumber evidence="1">2.3.1.117</ecNumber>
    </recommendedName>
    <alternativeName>
        <fullName evidence="1">Tetrahydrodipicolinate N-succinyltransferase</fullName>
        <shortName evidence="1">THDP succinyltransferase</shortName>
        <shortName evidence="1">THP succinyltransferase</shortName>
    </alternativeName>
    <alternativeName>
        <fullName evidence="1">Tetrahydropicolinate succinylase</fullName>
    </alternativeName>
</protein>
<organism>
    <name type="scientific">Corynebacterium glutamicum (strain ATCC 13032 / DSM 20300 / JCM 1318 / BCRC 11384 / CCUG 27702 / LMG 3730 / NBRC 12168 / NCIMB 10025 / NRRL B-2784 / 534)</name>
    <dbReference type="NCBI Taxonomy" id="196627"/>
    <lineage>
        <taxon>Bacteria</taxon>
        <taxon>Bacillati</taxon>
        <taxon>Actinomycetota</taxon>
        <taxon>Actinomycetes</taxon>
        <taxon>Mycobacteriales</taxon>
        <taxon>Corynebacteriaceae</taxon>
        <taxon>Corynebacterium</taxon>
    </lineage>
</organism>
<feature type="chain" id="PRO_0000412258" description="2,3,4,5-tetrahydropyridine-2,6-dicarboxylate N-succinyltransferase">
    <location>
        <begin position="1"/>
        <end position="297"/>
    </location>
</feature>
<feature type="active site" description="Acyl-anhydride intermediate" evidence="1">
    <location>
        <position position="181"/>
    </location>
</feature>
<feature type="binding site" evidence="1">
    <location>
        <position position="148"/>
    </location>
    <ligand>
        <name>Mg(2+)</name>
        <dbReference type="ChEBI" id="CHEBI:18420"/>
        <label>1</label>
        <note>ligand shared between trimeric partners</note>
    </ligand>
</feature>
<feature type="binding site" evidence="1">
    <location>
        <position position="165"/>
    </location>
    <ligand>
        <name>Mg(2+)</name>
        <dbReference type="ChEBI" id="CHEBI:18420"/>
        <label>2</label>
        <note>ligand shared between trimeric partners</note>
    </ligand>
</feature>
<feature type="binding site" evidence="1">
    <location>
        <position position="183"/>
    </location>
    <ligand>
        <name>succinyl-CoA</name>
        <dbReference type="ChEBI" id="CHEBI:57292"/>
    </ligand>
</feature>
<feature type="binding site" evidence="1">
    <location>
        <position position="198"/>
    </location>
    <ligand>
        <name>succinyl-CoA</name>
        <dbReference type="ChEBI" id="CHEBI:57292"/>
    </ligand>
</feature>
<feature type="binding site" evidence="1">
    <location>
        <position position="201"/>
    </location>
    <ligand>
        <name>succinyl-CoA</name>
        <dbReference type="ChEBI" id="CHEBI:57292"/>
    </ligand>
</feature>
<feature type="binding site" evidence="1">
    <location>
        <position position="224"/>
    </location>
    <ligand>
        <name>succinyl-CoA</name>
        <dbReference type="ChEBI" id="CHEBI:57292"/>
    </ligand>
</feature>
<feature type="binding site" evidence="1">
    <location>
        <begin position="239"/>
        <end position="240"/>
    </location>
    <ligand>
        <name>succinyl-CoA</name>
        <dbReference type="ChEBI" id="CHEBI:57292"/>
    </ligand>
</feature>
<feature type="binding site" evidence="1">
    <location>
        <position position="247"/>
    </location>
    <ligand>
        <name>succinyl-CoA</name>
        <dbReference type="ChEBI" id="CHEBI:57292"/>
    </ligand>
</feature>
<feature type="binding site" evidence="1">
    <location>
        <position position="258"/>
    </location>
    <ligand>
        <name>succinyl-CoA</name>
        <dbReference type="ChEBI" id="CHEBI:57292"/>
    </ligand>
</feature>
<feature type="binding site" evidence="1">
    <location>
        <begin position="271"/>
        <end position="274"/>
    </location>
    <ligand>
        <name>succinyl-CoA</name>
        <dbReference type="ChEBI" id="CHEBI:57292"/>
    </ligand>
</feature>
<feature type="strand" evidence="3">
    <location>
        <begin position="3"/>
        <end position="13"/>
    </location>
</feature>
<feature type="strand" evidence="3">
    <location>
        <begin position="18"/>
        <end position="22"/>
    </location>
</feature>
<feature type="strand" evidence="3">
    <location>
        <begin position="24"/>
        <end position="27"/>
    </location>
</feature>
<feature type="turn" evidence="3">
    <location>
        <begin position="32"/>
        <end position="34"/>
    </location>
</feature>
<feature type="helix" evidence="3">
    <location>
        <begin position="35"/>
        <end position="37"/>
    </location>
</feature>
<feature type="strand" evidence="3">
    <location>
        <begin position="39"/>
        <end position="41"/>
    </location>
</feature>
<feature type="turn" evidence="3">
    <location>
        <begin position="42"/>
        <end position="45"/>
    </location>
</feature>
<feature type="strand" evidence="3">
    <location>
        <begin position="46"/>
        <end position="56"/>
    </location>
</feature>
<feature type="helix" evidence="3">
    <location>
        <begin position="64"/>
        <end position="75"/>
    </location>
</feature>
<feature type="helix" evidence="3">
    <location>
        <begin position="89"/>
        <end position="92"/>
    </location>
</feature>
<feature type="strand" evidence="3">
    <location>
        <begin position="96"/>
        <end position="99"/>
    </location>
</feature>
<feature type="strand" evidence="3">
    <location>
        <begin position="102"/>
        <end position="106"/>
    </location>
</feature>
<feature type="helix" evidence="3">
    <location>
        <begin position="109"/>
        <end position="116"/>
    </location>
</feature>
<feature type="turn" evidence="3">
    <location>
        <begin position="117"/>
        <end position="119"/>
    </location>
</feature>
<feature type="strand" evidence="3">
    <location>
        <begin position="124"/>
        <end position="130"/>
    </location>
</feature>
<feature type="helix" evidence="3">
    <location>
        <begin position="133"/>
        <end position="135"/>
    </location>
</feature>
<feature type="strand" evidence="3">
    <location>
        <begin position="143"/>
        <end position="146"/>
    </location>
</feature>
<feature type="helix" evidence="3">
    <location>
        <begin position="147"/>
        <end position="149"/>
    </location>
</feature>
<feature type="strand" evidence="3">
    <location>
        <begin position="154"/>
        <end position="156"/>
    </location>
</feature>
<feature type="strand" evidence="3">
    <location>
        <begin position="172"/>
        <end position="176"/>
    </location>
</feature>
<feature type="strand" evidence="3">
    <location>
        <begin position="182"/>
        <end position="184"/>
    </location>
</feature>
<feature type="strand" evidence="2">
    <location>
        <begin position="201"/>
        <end position="203"/>
    </location>
</feature>
<feature type="strand" evidence="2">
    <location>
        <begin position="210"/>
        <end position="212"/>
    </location>
</feature>
<feature type="strand" evidence="3">
    <location>
        <begin position="249"/>
        <end position="252"/>
    </location>
</feature>
<feature type="strand" evidence="3">
    <location>
        <begin position="255"/>
        <end position="258"/>
    </location>
</feature>
<feature type="helix" evidence="3">
    <location>
        <begin position="259"/>
        <end position="262"/>
    </location>
</feature>
<feature type="strand" evidence="3">
    <location>
        <begin position="266"/>
        <end position="272"/>
    </location>
</feature>
<feature type="turn" evidence="3">
    <location>
        <begin position="274"/>
        <end position="276"/>
    </location>
</feature>
<feature type="strand" evidence="3">
    <location>
        <begin position="279"/>
        <end position="283"/>
    </location>
</feature>
<reference key="1">
    <citation type="journal article" date="2003" name="Appl. Microbiol. Biotechnol.">
        <title>The Corynebacterium glutamicum genome: features and impacts on biotechnological processes.</title>
        <authorList>
            <person name="Ikeda M."/>
            <person name="Nakagawa S."/>
        </authorList>
    </citation>
    <scope>NUCLEOTIDE SEQUENCE [LARGE SCALE GENOMIC DNA]</scope>
    <source>
        <strain>ATCC 13032 / DSM 20300 / JCM 1318 / BCRC 11384 / CCUG 27702 / LMG 3730 / NBRC 12168 / NCIMB 10025 / NRRL B-2784 / 534</strain>
    </source>
</reference>
<reference key="2">
    <citation type="journal article" date="2003" name="J. Biotechnol.">
        <title>The complete Corynebacterium glutamicum ATCC 13032 genome sequence and its impact on the production of L-aspartate-derived amino acids and vitamins.</title>
        <authorList>
            <person name="Kalinowski J."/>
            <person name="Bathe B."/>
            <person name="Bartels D."/>
            <person name="Bischoff N."/>
            <person name="Bott M."/>
            <person name="Burkovski A."/>
            <person name="Dusch N."/>
            <person name="Eggeling L."/>
            <person name="Eikmanns B.J."/>
            <person name="Gaigalat L."/>
            <person name="Goesmann A."/>
            <person name="Hartmann M."/>
            <person name="Huthmacher K."/>
            <person name="Kraemer R."/>
            <person name="Linke B."/>
            <person name="McHardy A.C."/>
            <person name="Meyer F."/>
            <person name="Moeckel B."/>
            <person name="Pfefferle W."/>
            <person name="Puehler A."/>
            <person name="Rey D.A."/>
            <person name="Rueckert C."/>
            <person name="Rupp O."/>
            <person name="Sahm H."/>
            <person name="Wendisch V.F."/>
            <person name="Wiegraebe I."/>
            <person name="Tauch A."/>
        </authorList>
    </citation>
    <scope>NUCLEOTIDE SEQUENCE [LARGE SCALE GENOMIC DNA]</scope>
    <source>
        <strain>ATCC 13032 / DSM 20300 / JCM 1318 / BCRC 11384 / CCUG 27702 / LMG 3730 / NBRC 12168 / NCIMB 10025 / NRRL B-2784 / 534</strain>
    </source>
</reference>
<accession>Q8NRE3</accession>
<accession>Q6M660</accession>
<proteinExistence type="evidence at protein level"/>
<name>DAPD_CORGL</name>
<comment type="function">
    <text evidence="1">Catalyzes the conversion of the cyclic tetrahydrodipicolinate (THDP) into the acyclic N-succinyl-L-2-amino-6-oxopimelate using succinyl-CoA.</text>
</comment>
<comment type="catalytic activity">
    <reaction evidence="1">
        <text>(S)-2,3,4,5-tetrahydrodipicolinate + succinyl-CoA + H2O = (S)-2-succinylamino-6-oxoheptanedioate + CoA</text>
        <dbReference type="Rhea" id="RHEA:17325"/>
        <dbReference type="ChEBI" id="CHEBI:15377"/>
        <dbReference type="ChEBI" id="CHEBI:15685"/>
        <dbReference type="ChEBI" id="CHEBI:16845"/>
        <dbReference type="ChEBI" id="CHEBI:57287"/>
        <dbReference type="ChEBI" id="CHEBI:57292"/>
        <dbReference type="EC" id="2.3.1.117"/>
    </reaction>
</comment>
<comment type="pathway">
    <text evidence="1">Amino-acid biosynthesis; L-lysine biosynthesis via DAP pathway; LL-2,6-diaminopimelate from (S)-tetrahydrodipicolinate (succinylase route): step 1/3.</text>
</comment>
<comment type="subunit">
    <text evidence="1">Homotrimer.</text>
</comment>
<comment type="subcellular location">
    <subcellularLocation>
        <location evidence="1">Cytoplasm</location>
    </subcellularLocation>
</comment>
<comment type="similarity">
    <text evidence="1">Belongs to the type 2 tetrahydrodipicolinate N-succinyltransferase family.</text>
</comment>
<keyword id="KW-0002">3D-structure</keyword>
<keyword id="KW-0012">Acyltransferase</keyword>
<keyword id="KW-0028">Amino-acid biosynthesis</keyword>
<keyword id="KW-0963">Cytoplasm</keyword>
<keyword id="KW-0220">Diaminopimelate biosynthesis</keyword>
<keyword id="KW-0457">Lysine biosynthesis</keyword>
<keyword id="KW-0460">Magnesium</keyword>
<keyword id="KW-0479">Metal-binding</keyword>
<keyword id="KW-1185">Reference proteome</keyword>
<keyword id="KW-0808">Transferase</keyword>
<evidence type="ECO:0000255" key="1">
    <source>
        <dbReference type="HAMAP-Rule" id="MF_02122"/>
    </source>
</evidence>
<evidence type="ECO:0007829" key="2">
    <source>
        <dbReference type="PDB" id="5E3P"/>
    </source>
</evidence>
<evidence type="ECO:0007829" key="3">
    <source>
        <dbReference type="PDB" id="5E3Q"/>
    </source>
</evidence>